<protein>
    <recommendedName>
        <fullName>Calponin-1</fullName>
    </recommendedName>
    <alternativeName>
        <fullName>Basic calponin</fullName>
    </alternativeName>
    <alternativeName>
        <fullName>Calponin H1, smooth muscle</fullName>
    </alternativeName>
</protein>
<reference key="1">
    <citation type="journal article" date="1993" name="FEBS Lett.">
        <title>Mammalian calponin. Identification and expression of genetic variants.</title>
        <authorList>
            <person name="Strasser P."/>
            <person name="Gimona M."/>
            <person name="Moessler H."/>
            <person name="Herzog M."/>
            <person name="Small J.V."/>
        </authorList>
    </citation>
    <scope>NUCLEOTIDE SEQUENCE [MRNA]</scope>
    <source>
        <tissue>Smooth muscle</tissue>
    </source>
</reference>
<reference key="2">
    <citation type="submission" date="1995-11" db="EMBL/GenBank/DDBJ databases">
        <authorList>
            <person name="Gao J.M."/>
            <person name="Hwang J.M."/>
            <person name="Resek M.E."/>
            <person name="Jin J.P."/>
        </authorList>
    </citation>
    <scope>NUCLEOTIDE SEQUENCE [GENOMIC DNA]</scope>
    <source>
        <strain>129/Sv</strain>
    </source>
</reference>
<reference key="3">
    <citation type="submission" date="1995-06" db="EMBL/GenBank/DDBJ databases">
        <authorList>
            <person name="Miano J.M."/>
            <person name="Olson E.N."/>
        </authorList>
    </citation>
    <scope>NUCLEOTIDE SEQUENCE [GENOMIC DNA]</scope>
    <source>
        <strain>129/Sv</strain>
        <tissue>Liver</tissue>
    </source>
</reference>
<reference key="4">
    <citation type="journal article" date="1996" name="J. Biol. Chem.">
        <title>Developmental pattern of expression and genomic organization of the calponin-h1 gene. A contractile smooth muscle cell marker.</title>
        <authorList>
            <person name="Samaha F.F."/>
            <person name="Ip H.S."/>
            <person name="Morrisey E.E."/>
            <person name="Seltzer J."/>
            <person name="Tang Z."/>
            <person name="Solway J."/>
            <person name="Parmacek M.S."/>
        </authorList>
    </citation>
    <scope>NUCLEOTIDE SEQUENCE [GENOMIC DNA]</scope>
    <source>
        <strain>129/Sv</strain>
    </source>
</reference>
<reference key="5">
    <citation type="journal article" date="2010" name="Cell">
        <title>A tissue-specific atlas of mouse protein phosphorylation and expression.</title>
        <authorList>
            <person name="Huttlin E.L."/>
            <person name="Jedrychowski M.P."/>
            <person name="Elias J.E."/>
            <person name="Goswami T."/>
            <person name="Rad R."/>
            <person name="Beausoleil S.A."/>
            <person name="Villen J."/>
            <person name="Haas W."/>
            <person name="Sowa M.E."/>
            <person name="Gygi S.P."/>
        </authorList>
    </citation>
    <scope>IDENTIFICATION BY MASS SPECTROMETRY [LARGE SCALE ANALYSIS]</scope>
    <source>
        <tissue>Heart</tissue>
        <tissue>Lung</tissue>
        <tissue>Spleen</tissue>
        <tissue>Testis</tissue>
    </source>
</reference>
<keyword id="KW-0009">Actin-binding</keyword>
<keyword id="KW-0025">Alternative splicing</keyword>
<keyword id="KW-0112">Calmodulin-binding</keyword>
<keyword id="KW-0597">Phosphoprotein</keyword>
<keyword id="KW-1185">Reference proteome</keyword>
<keyword id="KW-0677">Repeat</keyword>
<feature type="chain" id="PRO_0000204768" description="Calponin-1">
    <location>
        <begin position="1"/>
        <end position="297"/>
    </location>
</feature>
<feature type="domain" description="Calponin-homology (CH)" evidence="2">
    <location>
        <begin position="28"/>
        <end position="131"/>
    </location>
</feature>
<feature type="repeat" description="Calponin-like 1">
    <location>
        <begin position="164"/>
        <end position="189"/>
    </location>
</feature>
<feature type="repeat" description="Calponin-like 2">
    <location>
        <begin position="204"/>
        <end position="229"/>
    </location>
</feature>
<feature type="repeat" description="Calponin-like 3">
    <location>
        <begin position="243"/>
        <end position="268"/>
    </location>
</feature>
<feature type="modified residue" description="Phosphothreonine; by ROCK2" evidence="1">
    <location>
        <position position="170"/>
    </location>
</feature>
<feature type="modified residue" description="Phosphoserine; by ROCK2" evidence="1">
    <location>
        <position position="175"/>
    </location>
</feature>
<feature type="modified residue" description="Phosphothreonine; by ROCK2" evidence="1">
    <location>
        <position position="180"/>
    </location>
</feature>
<feature type="modified residue" description="Phosphothreonine; by ROCK2" evidence="1">
    <location>
        <position position="184"/>
    </location>
</feature>
<feature type="modified residue" description="Phosphothreonine; by ROCK2" evidence="1">
    <location>
        <position position="259"/>
    </location>
</feature>
<feature type="splice variant" id="VSP_000755" description="In isoform Beta." evidence="3">
    <location>
        <begin position="217"/>
        <end position="256"/>
    </location>
</feature>
<feature type="sequence conflict" description="In Ref. 2; AAB01453/AAB01452." evidence="3" ref="2">
    <original>R</original>
    <variation>E</variation>
    <location>
        <position position="35"/>
    </location>
</feature>
<dbReference type="EMBL" id="Z19542">
    <property type="protein sequence ID" value="CAA79602.1"/>
    <property type="molecule type" value="mRNA"/>
</dbReference>
<dbReference type="EMBL" id="L49022">
    <property type="protein sequence ID" value="AAB01453.1"/>
    <property type="molecule type" value="Genomic_DNA"/>
</dbReference>
<dbReference type="EMBL" id="L49022">
    <property type="protein sequence ID" value="AAB01452.1"/>
    <property type="molecule type" value="Genomic_DNA"/>
</dbReference>
<dbReference type="EMBL" id="U28932">
    <property type="protein sequence ID" value="AAC52448.1"/>
    <property type="molecule type" value="Genomic_DNA"/>
</dbReference>
<dbReference type="EMBL" id="U40351">
    <property type="protein sequence ID" value="AAC52353.1"/>
    <property type="molecule type" value="Genomic_DNA"/>
</dbReference>
<dbReference type="EMBL" id="U38930">
    <property type="protein sequence ID" value="AAC52353.1"/>
    <property type="status" value="JOINED"/>
    <property type="molecule type" value="Genomic_DNA"/>
</dbReference>
<dbReference type="EMBL" id="U40348">
    <property type="protein sequence ID" value="AAC52353.1"/>
    <property type="status" value="JOINED"/>
    <property type="molecule type" value="Genomic_DNA"/>
</dbReference>
<dbReference type="EMBL" id="U40349">
    <property type="protein sequence ID" value="AAC52353.1"/>
    <property type="status" value="JOINED"/>
    <property type="molecule type" value="Genomic_DNA"/>
</dbReference>
<dbReference type="EMBL" id="U40350">
    <property type="protein sequence ID" value="AAC52353.1"/>
    <property type="status" value="JOINED"/>
    <property type="molecule type" value="Genomic_DNA"/>
</dbReference>
<dbReference type="CCDS" id="CCDS22921.1">
    <molecule id="Q08091-1"/>
</dbReference>
<dbReference type="PIR" id="S36145">
    <property type="entry name" value="S31486"/>
</dbReference>
<dbReference type="RefSeq" id="NP_034052.3">
    <molecule id="Q08091-1"/>
    <property type="nucleotide sequence ID" value="NM_009922.4"/>
</dbReference>
<dbReference type="SMR" id="Q08091"/>
<dbReference type="BioGRID" id="198790">
    <property type="interactions" value="2"/>
</dbReference>
<dbReference type="FunCoup" id="Q08091">
    <property type="interactions" value="115"/>
</dbReference>
<dbReference type="STRING" id="10090.ENSMUSP00000001384"/>
<dbReference type="GlyGen" id="Q08091">
    <property type="glycosylation" value="1 site, 1 N-linked glycan (1 site)"/>
</dbReference>
<dbReference type="iPTMnet" id="Q08091"/>
<dbReference type="PhosphoSitePlus" id="Q08091"/>
<dbReference type="CPTAC" id="non-CPTAC-3970"/>
<dbReference type="PaxDb" id="10090-ENSMUSP00000001384"/>
<dbReference type="PeptideAtlas" id="Q08091"/>
<dbReference type="ProteomicsDB" id="279120">
    <molecule id="Q08091-1"/>
</dbReference>
<dbReference type="ProteomicsDB" id="279121">
    <molecule id="Q08091-2"/>
</dbReference>
<dbReference type="Pumba" id="Q08091"/>
<dbReference type="Antibodypedia" id="1965">
    <property type="antibodies" value="1151 antibodies from 43 providers"/>
</dbReference>
<dbReference type="DNASU" id="12797"/>
<dbReference type="Ensembl" id="ENSMUST00000001384.6">
    <molecule id="Q08091-1"/>
    <property type="protein sequence ID" value="ENSMUSP00000001384.5"/>
    <property type="gene ID" value="ENSMUSG00000001349.6"/>
</dbReference>
<dbReference type="GeneID" id="12797"/>
<dbReference type="KEGG" id="mmu:12797"/>
<dbReference type="UCSC" id="uc009onv.2">
    <molecule id="Q08091-1"/>
    <property type="organism name" value="mouse"/>
</dbReference>
<dbReference type="AGR" id="MGI:104979"/>
<dbReference type="CTD" id="1264"/>
<dbReference type="MGI" id="MGI:104979">
    <property type="gene designation" value="Cnn1"/>
</dbReference>
<dbReference type="VEuPathDB" id="HostDB:ENSMUSG00000001349"/>
<dbReference type="eggNOG" id="KOG2046">
    <property type="taxonomic scope" value="Eukaryota"/>
</dbReference>
<dbReference type="GeneTree" id="ENSGT00940000159680"/>
<dbReference type="HOGENOM" id="CLU_055232_0_0_1"/>
<dbReference type="InParanoid" id="Q08091"/>
<dbReference type="OMA" id="GEPTHNH"/>
<dbReference type="OrthoDB" id="21595at2759"/>
<dbReference type="PhylomeDB" id="Q08091"/>
<dbReference type="TreeFam" id="TF313921"/>
<dbReference type="BioGRID-ORCS" id="12797">
    <property type="hits" value="2 hits in 78 CRISPR screens"/>
</dbReference>
<dbReference type="PRO" id="PR:Q08091"/>
<dbReference type="Proteomes" id="UP000000589">
    <property type="component" value="Chromosome 9"/>
</dbReference>
<dbReference type="RNAct" id="Q08091">
    <property type="molecule type" value="protein"/>
</dbReference>
<dbReference type="Bgee" id="ENSMUSG00000001349">
    <property type="expression patterns" value="Expressed in ascending aorta and 120 other cell types or tissues"/>
</dbReference>
<dbReference type="ExpressionAtlas" id="Q08091">
    <property type="expression patterns" value="baseline and differential"/>
</dbReference>
<dbReference type="GO" id="GO:0005856">
    <property type="term" value="C:cytoskeleton"/>
    <property type="evidence" value="ECO:0000266"/>
    <property type="project" value="MGI"/>
</dbReference>
<dbReference type="GO" id="GO:0003779">
    <property type="term" value="F:actin binding"/>
    <property type="evidence" value="ECO:0007669"/>
    <property type="project" value="UniProtKB-KW"/>
</dbReference>
<dbReference type="GO" id="GO:0005516">
    <property type="term" value="F:calmodulin binding"/>
    <property type="evidence" value="ECO:0007669"/>
    <property type="project" value="UniProtKB-KW"/>
</dbReference>
<dbReference type="GO" id="GO:0031032">
    <property type="term" value="P:actomyosin structure organization"/>
    <property type="evidence" value="ECO:0007669"/>
    <property type="project" value="InterPro"/>
</dbReference>
<dbReference type="GO" id="GO:1904706">
    <property type="term" value="P:negative regulation of vascular associated smooth muscle cell proliferation"/>
    <property type="evidence" value="ECO:0007669"/>
    <property type="project" value="Ensembl"/>
</dbReference>
<dbReference type="CDD" id="cd21282">
    <property type="entry name" value="CH_CNN1"/>
    <property type="match status" value="1"/>
</dbReference>
<dbReference type="FunFam" id="1.10.418.10:FF:000040">
    <property type="entry name" value="Calponin"/>
    <property type="match status" value="1"/>
</dbReference>
<dbReference type="Gene3D" id="1.10.418.10">
    <property type="entry name" value="Calponin-like domain"/>
    <property type="match status" value="1"/>
</dbReference>
<dbReference type="InterPro" id="IPR050606">
    <property type="entry name" value="Calponin-like"/>
</dbReference>
<dbReference type="InterPro" id="IPR001997">
    <property type="entry name" value="Calponin/LIMCH1"/>
</dbReference>
<dbReference type="InterPro" id="IPR000557">
    <property type="entry name" value="Calponin_repeat"/>
</dbReference>
<dbReference type="InterPro" id="IPR001715">
    <property type="entry name" value="CH_dom"/>
</dbReference>
<dbReference type="InterPro" id="IPR036872">
    <property type="entry name" value="CH_dom_sf"/>
</dbReference>
<dbReference type="InterPro" id="IPR003096">
    <property type="entry name" value="SM22_calponin"/>
</dbReference>
<dbReference type="PANTHER" id="PTHR47385">
    <property type="entry name" value="CALPONIN"/>
    <property type="match status" value="1"/>
</dbReference>
<dbReference type="PANTHER" id="PTHR47385:SF10">
    <property type="entry name" value="TRANSGELIN-3"/>
    <property type="match status" value="1"/>
</dbReference>
<dbReference type="Pfam" id="PF00402">
    <property type="entry name" value="Calponin"/>
    <property type="match status" value="3"/>
</dbReference>
<dbReference type="Pfam" id="PF00307">
    <property type="entry name" value="CH"/>
    <property type="match status" value="1"/>
</dbReference>
<dbReference type="PRINTS" id="PR00889">
    <property type="entry name" value="CALPONIN"/>
</dbReference>
<dbReference type="PRINTS" id="PR00888">
    <property type="entry name" value="SM22CALPONIN"/>
</dbReference>
<dbReference type="SMART" id="SM00033">
    <property type="entry name" value="CH"/>
    <property type="match status" value="1"/>
</dbReference>
<dbReference type="SUPFAM" id="SSF47576">
    <property type="entry name" value="Calponin-homology domain, CH-domain"/>
    <property type="match status" value="1"/>
</dbReference>
<dbReference type="PROSITE" id="PS01052">
    <property type="entry name" value="CALPONIN_1"/>
    <property type="match status" value="3"/>
</dbReference>
<dbReference type="PROSITE" id="PS51122">
    <property type="entry name" value="CALPONIN_2"/>
    <property type="match status" value="3"/>
</dbReference>
<dbReference type="PROSITE" id="PS50021">
    <property type="entry name" value="CH"/>
    <property type="match status" value="1"/>
</dbReference>
<name>CNN1_MOUSE</name>
<accession>Q08091</accession>
<proteinExistence type="evidence at protein level"/>
<comment type="function">
    <text>Thin filament-associated protein that is implicated in the regulation and modulation of smooth muscle contraction. It is capable of binding to actin, calmodulin and tropomyosin. The interaction of calponin with actin inhibits the actomyosin Mg-ATPase activity.</text>
</comment>
<comment type="subunit">
    <text evidence="1">Part of cGMP kinase signaling complex at least composed of ACTA2/alpha-actin, CNN1/calponin H1, PLN/phospholamban, PRKG1 and ITPR1.</text>
</comment>
<comment type="alternative products">
    <event type="alternative splicing"/>
    <isoform>
        <id>Q08091-1</id>
        <name>Alpha</name>
        <sequence type="displayed"/>
    </isoform>
    <isoform>
        <id>Q08091-2</id>
        <name>Beta</name>
        <sequence type="described" ref="VSP_000755"/>
    </isoform>
</comment>
<comment type="tissue specificity">
    <text>Smooth muscle, and tissues containing significant amounts of smooth muscle.</text>
</comment>
<comment type="similarity">
    <text evidence="3">Belongs to the calponin family.</text>
</comment>
<evidence type="ECO:0000250" key="1"/>
<evidence type="ECO:0000255" key="2">
    <source>
        <dbReference type="PROSITE-ProRule" id="PRU00044"/>
    </source>
</evidence>
<evidence type="ECO:0000305" key="3"/>
<gene>
    <name type="primary">Cnn1</name>
</gene>
<organism>
    <name type="scientific">Mus musculus</name>
    <name type="common">Mouse</name>
    <dbReference type="NCBI Taxonomy" id="10090"/>
    <lineage>
        <taxon>Eukaryota</taxon>
        <taxon>Metazoa</taxon>
        <taxon>Chordata</taxon>
        <taxon>Craniata</taxon>
        <taxon>Vertebrata</taxon>
        <taxon>Euteleostomi</taxon>
        <taxon>Mammalia</taxon>
        <taxon>Eutheria</taxon>
        <taxon>Euarchontoglires</taxon>
        <taxon>Glires</taxon>
        <taxon>Rodentia</taxon>
        <taxon>Myomorpha</taxon>
        <taxon>Muroidea</taxon>
        <taxon>Muridae</taxon>
        <taxon>Murinae</taxon>
        <taxon>Mus</taxon>
        <taxon>Mus</taxon>
    </lineage>
</organism>
<sequence length="297" mass="33356">MSSAHFNRGPAYGLSAEVKNKLAQKYDHQREQELREWIEGVTGRRIGNNFMDGLKDGIILCEFINKLQPGSVKKVNESTQNWHQLENIGNFIKAITKYGVKPHDIFEANDLFENTNHTQVQSTLLALASMAKTKGNKVNVGVKYAEKQERRFEPEKLREGRNIIGLQMGTNKFASQQGMTAYGTRRHLYDPKLGTDQPLDQATISLQMGTNKGASQAGMTAPGTKRQIFEPGLGMEHCDTLNVSLQMGSNKGASQRGMTVYGLPRQVYDPKYCLNPEYPELSEPTHNHHPHNYYNSA</sequence>